<comment type="function">
    <text>Insulin decreases blood glucose concentration. It increases cell permeability to monosaccharides, amino acids and fatty acids. It accelerates glycolysis, the pentose phosphate cycle, and glycogen synthesis in liver.</text>
</comment>
<comment type="subunit">
    <text>Heterodimer of a B chain and an A chain linked by two disulfide bonds.</text>
</comment>
<comment type="subcellular location">
    <subcellularLocation>
        <location>Secreted</location>
    </subcellularLocation>
</comment>
<comment type="similarity">
    <text evidence="1">Belongs to the insulin family.</text>
</comment>
<evidence type="ECO:0000305" key="1"/>
<sequence length="51" mass="5789">MAPPQHLCGSHLVDALYLVCGDRGFFYNPKGIVDQCCHRPCDIFDLQNYCN</sequence>
<organism>
    <name type="scientific">Gadus morhua subsp. callarias</name>
    <name type="common">Baltic cod</name>
    <name type="synonym">Gadus callarias</name>
    <dbReference type="NCBI Taxonomy" id="8053"/>
    <lineage>
        <taxon>Eukaryota</taxon>
        <taxon>Metazoa</taxon>
        <taxon>Chordata</taxon>
        <taxon>Craniata</taxon>
        <taxon>Vertebrata</taxon>
        <taxon>Euteleostomi</taxon>
        <taxon>Actinopterygii</taxon>
        <taxon>Neopterygii</taxon>
        <taxon>Teleostei</taxon>
        <taxon>Neoteleostei</taxon>
        <taxon>Acanthomorphata</taxon>
        <taxon>Zeiogadaria</taxon>
        <taxon>Gadariae</taxon>
        <taxon>Gadiformes</taxon>
        <taxon>Gadoidei</taxon>
        <taxon>Gadidae</taxon>
        <taxon>Gadus</taxon>
    </lineage>
</organism>
<feature type="peptide" id="PRO_0000015811" description="Insulin B chain">
    <location>
        <begin position="1"/>
        <end position="30"/>
    </location>
</feature>
<feature type="peptide" id="PRO_0000015812" description="Insulin A chain">
    <location>
        <begin position="31"/>
        <end position="51"/>
    </location>
</feature>
<feature type="disulfide bond" description="Interchain (between B and A chains)">
    <location>
        <begin position="8"/>
        <end position="37"/>
    </location>
</feature>
<feature type="disulfide bond" description="Interchain (between B and A chains)">
    <location>
        <begin position="20"/>
        <end position="50"/>
    </location>
</feature>
<feature type="disulfide bond">
    <location>
        <begin position="36"/>
        <end position="41"/>
    </location>
</feature>
<feature type="non-consecutive residues" evidence="1">
    <location>
        <begin position="30"/>
        <end position="31"/>
    </location>
</feature>
<keyword id="KW-0119">Carbohydrate metabolism</keyword>
<keyword id="KW-0903">Direct protein sequencing</keyword>
<keyword id="KW-1015">Disulfide bond</keyword>
<keyword id="KW-0313">Glucose metabolism</keyword>
<keyword id="KW-0372">Hormone</keyword>
<keyword id="KW-0964">Secreted</keyword>
<name>INS_GADMC</name>
<protein>
    <recommendedName>
        <fullName>Insulin</fullName>
    </recommendedName>
    <component>
        <recommendedName>
            <fullName>Insulin B chain</fullName>
        </recommendedName>
    </component>
    <component>
        <recommendedName>
            <fullName>Insulin A chain</fullName>
        </recommendedName>
    </component>
</protein>
<gene>
    <name type="primary">ins</name>
</gene>
<reference key="1">
    <citation type="journal article" date="1968" name="Biochem. J.">
        <title>The sequence of amino acids in insulin isolated from islet tissue of the cod (Gadus callarias).</title>
        <authorList>
            <person name="Reid K.B.M."/>
            <person name="Grant P.T."/>
            <person name="Youngson A."/>
        </authorList>
    </citation>
    <scope>PROTEIN SEQUENCE</scope>
</reference>
<reference key="2">
    <citation type="journal article" date="1968" name="Biochem. J.">
        <title>Isolation and a partial amino acid sequence of insulin from the islet tissue of cod (Gadus callarias).</title>
        <authorList>
            <person name="Grant P.T."/>
            <person name="Reid K.B.M."/>
        </authorList>
    </citation>
    <scope>PARTIAL PROTEIN SEQUENCE</scope>
</reference>
<proteinExistence type="evidence at protein level"/>
<dbReference type="SMR" id="P01336"/>
<dbReference type="GO" id="GO:0005615">
    <property type="term" value="C:extracellular space"/>
    <property type="evidence" value="ECO:0007669"/>
    <property type="project" value="TreeGrafter"/>
</dbReference>
<dbReference type="GO" id="GO:0005179">
    <property type="term" value="F:hormone activity"/>
    <property type="evidence" value="ECO:0007669"/>
    <property type="project" value="UniProtKB-KW"/>
</dbReference>
<dbReference type="GO" id="GO:0006006">
    <property type="term" value="P:glucose metabolic process"/>
    <property type="evidence" value="ECO:0007669"/>
    <property type="project" value="UniProtKB-KW"/>
</dbReference>
<dbReference type="CDD" id="cd04367">
    <property type="entry name" value="IlGF_insulin_like"/>
    <property type="match status" value="1"/>
</dbReference>
<dbReference type="Gene3D" id="1.10.100.10">
    <property type="entry name" value="Insulin-like"/>
    <property type="match status" value="1"/>
</dbReference>
<dbReference type="InterPro" id="IPR004825">
    <property type="entry name" value="Insulin"/>
</dbReference>
<dbReference type="InterPro" id="IPR016179">
    <property type="entry name" value="Insulin-like"/>
</dbReference>
<dbReference type="InterPro" id="IPR036438">
    <property type="entry name" value="Insulin-like_sf"/>
</dbReference>
<dbReference type="InterPro" id="IPR022353">
    <property type="entry name" value="Insulin_CS"/>
</dbReference>
<dbReference type="InterPro" id="IPR022352">
    <property type="entry name" value="Insulin_family"/>
</dbReference>
<dbReference type="PANTHER" id="PTHR11454:SF9">
    <property type="entry name" value="INSULIN"/>
    <property type="match status" value="1"/>
</dbReference>
<dbReference type="PANTHER" id="PTHR11454">
    <property type="entry name" value="INSULIN/INSULIN GROWTH FACTOR"/>
    <property type="match status" value="1"/>
</dbReference>
<dbReference type="Pfam" id="PF00049">
    <property type="entry name" value="Insulin"/>
    <property type="match status" value="2"/>
</dbReference>
<dbReference type="PRINTS" id="PR00277">
    <property type="entry name" value="INSULIN"/>
</dbReference>
<dbReference type="PRINTS" id="PR00276">
    <property type="entry name" value="INSULINFAMLY"/>
</dbReference>
<dbReference type="SMART" id="SM00078">
    <property type="entry name" value="IlGF"/>
    <property type="match status" value="1"/>
</dbReference>
<dbReference type="SUPFAM" id="SSF56994">
    <property type="entry name" value="Insulin-like"/>
    <property type="match status" value="1"/>
</dbReference>
<dbReference type="PROSITE" id="PS00262">
    <property type="entry name" value="INSULIN"/>
    <property type="match status" value="1"/>
</dbReference>
<accession>P01336</accession>